<name>MDH_MYCLE</name>
<comment type="function">
    <text evidence="1">Catalyzes the reversible oxidation of malate to oxaloacetate.</text>
</comment>
<comment type="catalytic activity">
    <reaction evidence="1">
        <text>(S)-malate + NAD(+) = oxaloacetate + NADH + H(+)</text>
        <dbReference type="Rhea" id="RHEA:21432"/>
        <dbReference type="ChEBI" id="CHEBI:15378"/>
        <dbReference type="ChEBI" id="CHEBI:15589"/>
        <dbReference type="ChEBI" id="CHEBI:16452"/>
        <dbReference type="ChEBI" id="CHEBI:57540"/>
        <dbReference type="ChEBI" id="CHEBI:57945"/>
        <dbReference type="EC" id="1.1.1.37"/>
    </reaction>
</comment>
<comment type="similarity">
    <text evidence="1">Belongs to the LDH/MDH superfamily. MDH type 2 family.</text>
</comment>
<dbReference type="EC" id="1.1.1.37" evidence="1"/>
<dbReference type="EMBL" id="U15180">
    <property type="protein sequence ID" value="AAA62912.1"/>
    <property type="molecule type" value="Genomic_DNA"/>
</dbReference>
<dbReference type="EMBL" id="AL583920">
    <property type="protein sequence ID" value="CAC31472.1"/>
    <property type="molecule type" value="Genomic_DNA"/>
</dbReference>
<dbReference type="PIR" id="T45206">
    <property type="entry name" value="T45206"/>
</dbReference>
<dbReference type="RefSeq" id="NP_301799.1">
    <property type="nucleotide sequence ID" value="NC_002677.1"/>
</dbReference>
<dbReference type="RefSeq" id="WP_010908123.1">
    <property type="nucleotide sequence ID" value="NC_002677.1"/>
</dbReference>
<dbReference type="SMR" id="P50917"/>
<dbReference type="STRING" id="272631.gene:17574917"/>
<dbReference type="KEGG" id="mle:ML1091"/>
<dbReference type="PATRIC" id="fig|272631.5.peg.1948"/>
<dbReference type="Leproma" id="ML1091"/>
<dbReference type="eggNOG" id="COG0039">
    <property type="taxonomic scope" value="Bacteria"/>
</dbReference>
<dbReference type="HOGENOM" id="CLU_040727_2_0_11"/>
<dbReference type="OrthoDB" id="9802969at2"/>
<dbReference type="Proteomes" id="UP000000806">
    <property type="component" value="Chromosome"/>
</dbReference>
<dbReference type="GO" id="GO:0030060">
    <property type="term" value="F:L-malate dehydrogenase (NAD+) activity"/>
    <property type="evidence" value="ECO:0007669"/>
    <property type="project" value="UniProtKB-UniRule"/>
</dbReference>
<dbReference type="GO" id="GO:0006108">
    <property type="term" value="P:malate metabolic process"/>
    <property type="evidence" value="ECO:0007669"/>
    <property type="project" value="InterPro"/>
</dbReference>
<dbReference type="GO" id="GO:0006099">
    <property type="term" value="P:tricarboxylic acid cycle"/>
    <property type="evidence" value="ECO:0007669"/>
    <property type="project" value="UniProtKB-UniRule"/>
</dbReference>
<dbReference type="CDD" id="cd01338">
    <property type="entry name" value="MDH_chloroplast-like"/>
    <property type="match status" value="1"/>
</dbReference>
<dbReference type="FunFam" id="3.40.50.720:FF:000010">
    <property type="entry name" value="Malate dehydrogenase"/>
    <property type="match status" value="1"/>
</dbReference>
<dbReference type="FunFam" id="3.90.110.10:FF:000002">
    <property type="entry name" value="Malate dehydrogenase"/>
    <property type="match status" value="1"/>
</dbReference>
<dbReference type="Gene3D" id="3.90.110.10">
    <property type="entry name" value="Lactate dehydrogenase/glycoside hydrolase, family 4, C-terminal"/>
    <property type="match status" value="1"/>
</dbReference>
<dbReference type="Gene3D" id="3.40.50.720">
    <property type="entry name" value="NAD(P)-binding Rossmann-like Domain"/>
    <property type="match status" value="1"/>
</dbReference>
<dbReference type="HAMAP" id="MF_01517">
    <property type="entry name" value="Malate_dehydrog_2"/>
    <property type="match status" value="1"/>
</dbReference>
<dbReference type="InterPro" id="IPR001557">
    <property type="entry name" value="L-lactate/malate_DH"/>
</dbReference>
<dbReference type="InterPro" id="IPR022383">
    <property type="entry name" value="Lactate/malate_DH_C"/>
</dbReference>
<dbReference type="InterPro" id="IPR001236">
    <property type="entry name" value="Lactate/malate_DH_N"/>
</dbReference>
<dbReference type="InterPro" id="IPR015955">
    <property type="entry name" value="Lactate_DH/Glyco_Ohase_4_C"/>
</dbReference>
<dbReference type="InterPro" id="IPR001252">
    <property type="entry name" value="Malate_DH_AS"/>
</dbReference>
<dbReference type="InterPro" id="IPR010945">
    <property type="entry name" value="Malate_DH_type2"/>
</dbReference>
<dbReference type="InterPro" id="IPR036291">
    <property type="entry name" value="NAD(P)-bd_dom_sf"/>
</dbReference>
<dbReference type="NCBIfam" id="TIGR01759">
    <property type="entry name" value="MalateDH-SF1"/>
    <property type="match status" value="1"/>
</dbReference>
<dbReference type="NCBIfam" id="NF003916">
    <property type="entry name" value="PRK05442.1"/>
    <property type="match status" value="1"/>
</dbReference>
<dbReference type="PANTHER" id="PTHR23382">
    <property type="entry name" value="MALATE DEHYDROGENASE"/>
    <property type="match status" value="1"/>
</dbReference>
<dbReference type="Pfam" id="PF02866">
    <property type="entry name" value="Ldh_1_C"/>
    <property type="match status" value="1"/>
</dbReference>
<dbReference type="Pfam" id="PF00056">
    <property type="entry name" value="Ldh_1_N"/>
    <property type="match status" value="1"/>
</dbReference>
<dbReference type="PIRSF" id="PIRSF000102">
    <property type="entry name" value="Lac_mal_DH"/>
    <property type="match status" value="1"/>
</dbReference>
<dbReference type="SUPFAM" id="SSF56327">
    <property type="entry name" value="LDH C-terminal domain-like"/>
    <property type="match status" value="1"/>
</dbReference>
<dbReference type="SUPFAM" id="SSF51735">
    <property type="entry name" value="NAD(P)-binding Rossmann-fold domains"/>
    <property type="match status" value="1"/>
</dbReference>
<dbReference type="PROSITE" id="PS00068">
    <property type="entry name" value="MDH"/>
    <property type="match status" value="1"/>
</dbReference>
<feature type="chain" id="PRO_0000113378" description="Malate dehydrogenase">
    <location>
        <begin position="1"/>
        <end position="329"/>
    </location>
</feature>
<feature type="active site" description="Proton acceptor" evidence="1">
    <location>
        <position position="188"/>
    </location>
</feature>
<feature type="binding site" evidence="1">
    <location>
        <begin position="12"/>
        <end position="18"/>
    </location>
    <ligand>
        <name>NAD(+)</name>
        <dbReference type="ChEBI" id="CHEBI:57540"/>
    </ligand>
</feature>
<feature type="binding site" evidence="1">
    <location>
        <position position="93"/>
    </location>
    <ligand>
        <name>substrate</name>
    </ligand>
</feature>
<feature type="binding site" evidence="1">
    <location>
        <position position="99"/>
    </location>
    <ligand>
        <name>substrate</name>
    </ligand>
</feature>
<feature type="binding site" evidence="1">
    <location>
        <position position="106"/>
    </location>
    <ligand>
        <name>NAD(+)</name>
        <dbReference type="ChEBI" id="CHEBI:57540"/>
    </ligand>
</feature>
<feature type="binding site" evidence="1">
    <location>
        <position position="113"/>
    </location>
    <ligand>
        <name>NAD(+)</name>
        <dbReference type="ChEBI" id="CHEBI:57540"/>
    </ligand>
</feature>
<feature type="binding site" evidence="1">
    <location>
        <begin position="130"/>
        <end position="132"/>
    </location>
    <ligand>
        <name>NAD(+)</name>
        <dbReference type="ChEBI" id="CHEBI:57540"/>
    </ligand>
</feature>
<feature type="binding site" evidence="1">
    <location>
        <position position="132"/>
    </location>
    <ligand>
        <name>substrate</name>
    </ligand>
</feature>
<feature type="binding site" evidence="1">
    <location>
        <position position="163"/>
    </location>
    <ligand>
        <name>substrate</name>
    </ligand>
</feature>
<organism>
    <name type="scientific">Mycobacterium leprae (strain TN)</name>
    <dbReference type="NCBI Taxonomy" id="272631"/>
    <lineage>
        <taxon>Bacteria</taxon>
        <taxon>Bacillati</taxon>
        <taxon>Actinomycetota</taxon>
        <taxon>Actinomycetes</taxon>
        <taxon>Mycobacteriales</taxon>
        <taxon>Mycobacteriaceae</taxon>
        <taxon>Mycobacterium</taxon>
    </lineage>
</organism>
<evidence type="ECO:0000255" key="1">
    <source>
        <dbReference type="HAMAP-Rule" id="MF_01517"/>
    </source>
</evidence>
<sequence>MSPRPLKVAVTGAAGQIGYSLLFRLASGSLLGLDRPIELRLLEIEPALKALEGVVMELDDCAFLLLAGVEIGADPNKVFDGVNLALLVGARPRGPGMERGDLLEANGAIFTAQGKALNAVAAADIRVGVTGNPANTNALIAMTNAPDIPRERFSALTRLDHNRAIAQLATKTGSAVTDIRKMTIWGNHSATQYPDVFHAEIGGKNAAEVVGDQAWIEDYFIPTVAKRGAAIIDARGASSAASAASATIDAARDWLLGTPEGNWVSMAVVSDGSYGVPEGLISSFPVTTTDGDWTIVRGLGIDDFSRGRIDKSTAELADERMAVKQLGLI</sequence>
<accession>P50917</accession>
<gene>
    <name evidence="1" type="primary">mdh</name>
    <name type="ordered locus">ML1091</name>
</gene>
<reference key="1">
    <citation type="submission" date="1995-05" db="EMBL/GenBank/DDBJ databases">
        <authorList>
            <person name="Smith D.R."/>
            <person name="Robison K."/>
        </authorList>
    </citation>
    <scope>NUCLEOTIDE SEQUENCE [GENOMIC DNA]</scope>
</reference>
<reference key="2">
    <citation type="journal article" date="2001" name="Nature">
        <title>Massive gene decay in the leprosy bacillus.</title>
        <authorList>
            <person name="Cole S.T."/>
            <person name="Eiglmeier K."/>
            <person name="Parkhill J."/>
            <person name="James K.D."/>
            <person name="Thomson N.R."/>
            <person name="Wheeler P.R."/>
            <person name="Honore N."/>
            <person name="Garnier T."/>
            <person name="Churcher C.M."/>
            <person name="Harris D.E."/>
            <person name="Mungall K.L."/>
            <person name="Basham D."/>
            <person name="Brown D."/>
            <person name="Chillingworth T."/>
            <person name="Connor R."/>
            <person name="Davies R.M."/>
            <person name="Devlin K."/>
            <person name="Duthoy S."/>
            <person name="Feltwell T."/>
            <person name="Fraser A."/>
            <person name="Hamlin N."/>
            <person name="Holroyd S."/>
            <person name="Hornsby T."/>
            <person name="Jagels K."/>
            <person name="Lacroix C."/>
            <person name="Maclean J."/>
            <person name="Moule S."/>
            <person name="Murphy L.D."/>
            <person name="Oliver K."/>
            <person name="Quail M.A."/>
            <person name="Rajandream M.A."/>
            <person name="Rutherford K.M."/>
            <person name="Rutter S."/>
            <person name="Seeger K."/>
            <person name="Simon S."/>
            <person name="Simmonds M."/>
            <person name="Skelton J."/>
            <person name="Squares R."/>
            <person name="Squares S."/>
            <person name="Stevens K."/>
            <person name="Taylor K."/>
            <person name="Whitehead S."/>
            <person name="Woodward J.R."/>
            <person name="Barrell B.G."/>
        </authorList>
    </citation>
    <scope>NUCLEOTIDE SEQUENCE [LARGE SCALE GENOMIC DNA]</scope>
    <source>
        <strain>TN</strain>
    </source>
</reference>
<protein>
    <recommendedName>
        <fullName evidence="1">Malate dehydrogenase</fullName>
        <ecNumber evidence="1">1.1.1.37</ecNumber>
    </recommendedName>
</protein>
<keyword id="KW-0520">NAD</keyword>
<keyword id="KW-0560">Oxidoreductase</keyword>
<keyword id="KW-1185">Reference proteome</keyword>
<keyword id="KW-0816">Tricarboxylic acid cycle</keyword>
<proteinExistence type="inferred from homology"/>